<reference key="1">
    <citation type="submission" date="2007-03" db="EMBL/GenBank/DDBJ databases">
        <title>Genome sequence of Rhodospirillum centenum.</title>
        <authorList>
            <person name="Touchman J.W."/>
            <person name="Bauer C."/>
            <person name="Blankenship R.E."/>
        </authorList>
    </citation>
    <scope>NUCLEOTIDE SEQUENCE [LARGE SCALE GENOMIC DNA]</scope>
    <source>
        <strain>ATCC 51521 / SW</strain>
    </source>
</reference>
<sequence>MFRGSIVALITPFRNGGIDERAFQDFVEWQIAEGTHGLVPVGTTGESTTLSHEEHRRVIQLCVEVSRGRVPVIAGTGSNSTEEAISLTRFAKEAGATAALVVTPYYNKPTQEGLYAHYKAIHDAVDLPIVIYNIPGRSVVDMSVATMARLAKLPNIVGVKDATGDLVRPLRTRIEIGPDFCQLSGEDATATAFLAQGGVGCISVTANVAPGLCARMQDAWARGDLAEMARVRDLLMPLHHALFVETSPGPVKYAASLLGKCAEDMRLPMVPPTQATRDVVRAALVKTGLLT</sequence>
<comment type="function">
    <text evidence="1">Catalyzes the condensation of (S)-aspartate-beta-semialdehyde [(S)-ASA] and pyruvate to 4-hydroxy-tetrahydrodipicolinate (HTPA).</text>
</comment>
<comment type="catalytic activity">
    <reaction evidence="1">
        <text>L-aspartate 4-semialdehyde + pyruvate = (2S,4S)-4-hydroxy-2,3,4,5-tetrahydrodipicolinate + H2O + H(+)</text>
        <dbReference type="Rhea" id="RHEA:34171"/>
        <dbReference type="ChEBI" id="CHEBI:15361"/>
        <dbReference type="ChEBI" id="CHEBI:15377"/>
        <dbReference type="ChEBI" id="CHEBI:15378"/>
        <dbReference type="ChEBI" id="CHEBI:67139"/>
        <dbReference type="ChEBI" id="CHEBI:537519"/>
        <dbReference type="EC" id="4.3.3.7"/>
    </reaction>
</comment>
<comment type="pathway">
    <text evidence="1">Amino-acid biosynthesis; L-lysine biosynthesis via DAP pathway; (S)-tetrahydrodipicolinate from L-aspartate: step 3/4.</text>
</comment>
<comment type="subunit">
    <text evidence="1">Homotetramer; dimer of dimers.</text>
</comment>
<comment type="subcellular location">
    <subcellularLocation>
        <location evidence="1">Cytoplasm</location>
    </subcellularLocation>
</comment>
<comment type="similarity">
    <text evidence="1">Belongs to the DapA family.</text>
</comment>
<comment type="caution">
    <text evidence="2">Was originally thought to be a dihydrodipicolinate synthase (DHDPS), catalyzing the condensation of (S)-aspartate-beta-semialdehyde [(S)-ASA] and pyruvate to dihydrodipicolinate (DHDP). However, it was shown in E.coli that the product of the enzymatic reaction is not dihydrodipicolinate but in fact (4S)-4-hydroxy-2,3,4,5-tetrahydro-(2S)-dipicolinic acid (HTPA), and that the consecutive dehydration reaction leading to DHDP is not spontaneous but catalyzed by DapB.</text>
</comment>
<feature type="chain" id="PRO_1000124061" description="4-hydroxy-tetrahydrodipicolinate synthase">
    <location>
        <begin position="1"/>
        <end position="291"/>
    </location>
</feature>
<feature type="active site" description="Proton donor/acceptor" evidence="1">
    <location>
        <position position="132"/>
    </location>
</feature>
<feature type="active site" description="Schiff-base intermediate with substrate" evidence="1">
    <location>
        <position position="160"/>
    </location>
</feature>
<feature type="binding site" evidence="1">
    <location>
        <position position="44"/>
    </location>
    <ligand>
        <name>pyruvate</name>
        <dbReference type="ChEBI" id="CHEBI:15361"/>
    </ligand>
</feature>
<feature type="binding site" evidence="1">
    <location>
        <position position="202"/>
    </location>
    <ligand>
        <name>pyruvate</name>
        <dbReference type="ChEBI" id="CHEBI:15361"/>
    </ligand>
</feature>
<feature type="site" description="Part of a proton relay during catalysis" evidence="1">
    <location>
        <position position="43"/>
    </location>
</feature>
<feature type="site" description="Part of a proton relay during catalysis" evidence="1">
    <location>
        <position position="106"/>
    </location>
</feature>
<proteinExistence type="inferred from homology"/>
<name>DAPA_RHOCS</name>
<dbReference type="EC" id="4.3.3.7" evidence="1"/>
<dbReference type="EMBL" id="CP000613">
    <property type="protein sequence ID" value="ACI98910.1"/>
    <property type="molecule type" value="Genomic_DNA"/>
</dbReference>
<dbReference type="RefSeq" id="WP_012566696.1">
    <property type="nucleotide sequence ID" value="NC_011420.2"/>
</dbReference>
<dbReference type="SMR" id="B6IN13"/>
<dbReference type="STRING" id="414684.RC1_1506"/>
<dbReference type="KEGG" id="rce:RC1_1506"/>
<dbReference type="eggNOG" id="COG0329">
    <property type="taxonomic scope" value="Bacteria"/>
</dbReference>
<dbReference type="HOGENOM" id="CLU_049343_7_1_5"/>
<dbReference type="OrthoDB" id="9782828at2"/>
<dbReference type="UniPathway" id="UPA00034">
    <property type="reaction ID" value="UER00017"/>
</dbReference>
<dbReference type="Proteomes" id="UP000001591">
    <property type="component" value="Chromosome"/>
</dbReference>
<dbReference type="GO" id="GO:0005829">
    <property type="term" value="C:cytosol"/>
    <property type="evidence" value="ECO:0007669"/>
    <property type="project" value="TreeGrafter"/>
</dbReference>
<dbReference type="GO" id="GO:0008840">
    <property type="term" value="F:4-hydroxy-tetrahydrodipicolinate synthase activity"/>
    <property type="evidence" value="ECO:0007669"/>
    <property type="project" value="UniProtKB-UniRule"/>
</dbReference>
<dbReference type="GO" id="GO:0019877">
    <property type="term" value="P:diaminopimelate biosynthetic process"/>
    <property type="evidence" value="ECO:0007669"/>
    <property type="project" value="UniProtKB-UniRule"/>
</dbReference>
<dbReference type="GO" id="GO:0009089">
    <property type="term" value="P:lysine biosynthetic process via diaminopimelate"/>
    <property type="evidence" value="ECO:0007669"/>
    <property type="project" value="UniProtKB-UniRule"/>
</dbReference>
<dbReference type="CDD" id="cd00950">
    <property type="entry name" value="DHDPS"/>
    <property type="match status" value="1"/>
</dbReference>
<dbReference type="Gene3D" id="3.20.20.70">
    <property type="entry name" value="Aldolase class I"/>
    <property type="match status" value="1"/>
</dbReference>
<dbReference type="HAMAP" id="MF_00418">
    <property type="entry name" value="DapA"/>
    <property type="match status" value="1"/>
</dbReference>
<dbReference type="InterPro" id="IPR013785">
    <property type="entry name" value="Aldolase_TIM"/>
</dbReference>
<dbReference type="InterPro" id="IPR005263">
    <property type="entry name" value="DapA"/>
</dbReference>
<dbReference type="InterPro" id="IPR002220">
    <property type="entry name" value="DapA-like"/>
</dbReference>
<dbReference type="InterPro" id="IPR020625">
    <property type="entry name" value="Schiff_base-form_aldolases_AS"/>
</dbReference>
<dbReference type="InterPro" id="IPR020624">
    <property type="entry name" value="Schiff_base-form_aldolases_CS"/>
</dbReference>
<dbReference type="NCBIfam" id="TIGR00674">
    <property type="entry name" value="dapA"/>
    <property type="match status" value="1"/>
</dbReference>
<dbReference type="PANTHER" id="PTHR12128:SF66">
    <property type="entry name" value="4-HYDROXY-2-OXOGLUTARATE ALDOLASE, MITOCHONDRIAL"/>
    <property type="match status" value="1"/>
</dbReference>
<dbReference type="PANTHER" id="PTHR12128">
    <property type="entry name" value="DIHYDRODIPICOLINATE SYNTHASE"/>
    <property type="match status" value="1"/>
</dbReference>
<dbReference type="Pfam" id="PF00701">
    <property type="entry name" value="DHDPS"/>
    <property type="match status" value="1"/>
</dbReference>
<dbReference type="PIRSF" id="PIRSF001365">
    <property type="entry name" value="DHDPS"/>
    <property type="match status" value="1"/>
</dbReference>
<dbReference type="PRINTS" id="PR00146">
    <property type="entry name" value="DHPICSNTHASE"/>
</dbReference>
<dbReference type="SMART" id="SM01130">
    <property type="entry name" value="DHDPS"/>
    <property type="match status" value="1"/>
</dbReference>
<dbReference type="SUPFAM" id="SSF51569">
    <property type="entry name" value="Aldolase"/>
    <property type="match status" value="1"/>
</dbReference>
<dbReference type="PROSITE" id="PS00665">
    <property type="entry name" value="DHDPS_1"/>
    <property type="match status" value="1"/>
</dbReference>
<dbReference type="PROSITE" id="PS00666">
    <property type="entry name" value="DHDPS_2"/>
    <property type="match status" value="1"/>
</dbReference>
<protein>
    <recommendedName>
        <fullName evidence="1">4-hydroxy-tetrahydrodipicolinate synthase</fullName>
        <shortName evidence="1">HTPA synthase</shortName>
        <ecNumber evidence="1">4.3.3.7</ecNumber>
    </recommendedName>
</protein>
<accession>B6IN13</accession>
<organism>
    <name type="scientific">Rhodospirillum centenum (strain ATCC 51521 / SW)</name>
    <dbReference type="NCBI Taxonomy" id="414684"/>
    <lineage>
        <taxon>Bacteria</taxon>
        <taxon>Pseudomonadati</taxon>
        <taxon>Pseudomonadota</taxon>
        <taxon>Alphaproteobacteria</taxon>
        <taxon>Rhodospirillales</taxon>
        <taxon>Rhodospirillaceae</taxon>
        <taxon>Rhodospirillum</taxon>
    </lineage>
</organism>
<evidence type="ECO:0000255" key="1">
    <source>
        <dbReference type="HAMAP-Rule" id="MF_00418"/>
    </source>
</evidence>
<evidence type="ECO:0000305" key="2"/>
<gene>
    <name evidence="1" type="primary">dapA</name>
    <name type="ordered locus">RC1_1506</name>
</gene>
<keyword id="KW-0028">Amino-acid biosynthesis</keyword>
<keyword id="KW-0963">Cytoplasm</keyword>
<keyword id="KW-0220">Diaminopimelate biosynthesis</keyword>
<keyword id="KW-0456">Lyase</keyword>
<keyword id="KW-0457">Lysine biosynthesis</keyword>
<keyword id="KW-1185">Reference proteome</keyword>
<keyword id="KW-0704">Schiff base</keyword>